<keyword id="KW-1031">Host cell junction</keyword>
<keyword id="KW-0945">Host-virus interaction</keyword>
<keyword id="KW-1090">Inhibition of host innate immune response by virus</keyword>
<keyword id="KW-0547">Nucleotide-binding</keyword>
<keyword id="KW-1185">Reference proteome</keyword>
<keyword id="KW-0694">RNA-binding</keyword>
<keyword id="KW-0941">Suppressor of RNA silencing</keyword>
<keyword id="KW-0813">Transport</keyword>
<keyword id="KW-0899">Viral immunoevasion</keyword>
<keyword id="KW-0916">Viral movement protein</keyword>
<sequence>MQLFIVKLDSRSSASNEILVLDINELRKYVSKHQLSFRGAQVHETNSEHSVRNWEDDNITMFFHTSNVFPSEKSVRHALFSRNSVHVCGPLNIGAFRDSLRVLQSPQFPIHTYGDDITVFDKLREFVVVPNSLAVVDMDTSAWERYTYSLFTDEPGTITLADETPPTISPTGRDSVSPVARFSPSISISSIAIGEVGSASKRRQRLVKQAKSSDKTPIPEIRLNKKDTVFAETGTEQASPKTEIVAATVHKIPVNHAEADKRVVVLKGRTKDKAQEVREVTSLARDTTGVEHELMQSVGDDSVQVSGELSGFGDESFEVSKTDVVGVENKQLALDRVPALEPCGEVSEDEELVSEGMYAVPLDLDIYAEKCPSPTPPNSPKKREKADHEPIDISSAMMKLRLIAAAFQKEMMAYDKIDCLSSDDPAYLLAQFCLRNLNGVFVPEYVEEHSSDEENADDPNQGWNGTPVHGSREIFEKLSESRLASMEMISNVKPIRWNSKKTTYAVTIERGNPNLIVTQSLTRGQSSQFRKVIRAFGCSTDYCLERLASRDYDAILMLMSSLSGACHATKSYCYLQIVAYGSFAAPECKELD</sequence>
<comment type="function">
    <text evidence="2 3 4">Transports viral genome to neighboring plant cells directly through plasmosdesmata, without any budding. The movement protein allows efficient cell to cell propagation, by bypassing the host cell wall barrier. Displays sequence non-specific nucleic acid binding activity. Acts as a suppressor of RNA-mediated gene silencing, also known as post-transcriptional gene silencing (PTGS), a mechanism of plant viral defense that limits the accumulation of viral RNAs.</text>
</comment>
<comment type="subcellular location">
    <subcellularLocation>
        <location evidence="3">Host cell junction</location>
        <location evidence="3">Host plasmodesma</location>
    </subcellularLocation>
</comment>
<feature type="chain" id="PRO_0000403632" description="Movement and RNA silencing protein VP6">
    <location>
        <begin position="1"/>
        <end position="592"/>
    </location>
</feature>
<feature type="region of interest" description="Disordered" evidence="1">
    <location>
        <begin position="450"/>
        <end position="469"/>
    </location>
</feature>
<organismHost>
    <name type="scientific">Oryza latifolia</name>
    <dbReference type="NCBI Taxonomy" id="4534"/>
</organismHost>
<organismHost>
    <name type="scientific">Oryza nivara</name>
    <name type="common">Indian wild rice</name>
    <name type="synonym">Oryza sativa f. spontanea</name>
    <dbReference type="NCBI Taxonomy" id="4536"/>
</organismHost>
<organismHost>
    <name type="scientific">Oryza rufipogon</name>
    <name type="common">Brownbeard rice</name>
    <name type="synonym">Asian wild rice</name>
    <dbReference type="NCBI Taxonomy" id="4529"/>
</organismHost>
<accession>O56045</accession>
<organism>
    <name type="scientific">Rice ragged stunt virus (isolate Thailand)</name>
    <name type="common">RRSV</name>
    <dbReference type="NCBI Taxonomy" id="649603"/>
    <lineage>
        <taxon>Viruses</taxon>
        <taxon>Riboviria</taxon>
        <taxon>Orthornavirae</taxon>
        <taxon>Duplornaviricota</taxon>
        <taxon>Resentoviricetes</taxon>
        <taxon>Reovirales</taxon>
        <taxon>Spinareoviridae</taxon>
        <taxon>Oryzavirus</taxon>
        <taxon>Rice ragged stunt virus</taxon>
    </lineage>
</organism>
<name>MVP_RRSVT</name>
<proteinExistence type="predicted"/>
<protein>
    <recommendedName>
        <fullName>Movement and RNA silencing protein VP6</fullName>
    </recommendedName>
</protein>
<evidence type="ECO:0000256" key="1">
    <source>
        <dbReference type="SAM" id="MobiDB-lite"/>
    </source>
</evidence>
<evidence type="ECO:0000269" key="2">
    <source>
    </source>
</evidence>
<evidence type="ECO:0000269" key="3">
    <source>
    </source>
</evidence>
<evidence type="ECO:0000269" key="4">
    <source>
    </source>
</evidence>
<reference key="1">
    <citation type="submission" date="1997-08" db="EMBL/GenBank/DDBJ databases">
        <title>Rice ragged stunt oryzavirus:complete sequence and genome organization.</title>
        <authorList>
            <person name="Upadhyaya N.M."/>
            <person name="Li Z."/>
            <person name="Ramm K."/>
            <person name="Yang M."/>
            <person name="Gellatly J.A."/>
            <person name="Kositratana W."/>
            <person name="Gerlach W.L."/>
            <person name="Waterhouse P.M."/>
        </authorList>
    </citation>
    <scope>NUCLEOTIDE SEQUENCE [GENOMIC RNA]</scope>
</reference>
<reference key="2">
    <citation type="journal article" date="2004" name="Acta Biochim. Biophys. Sin.">
        <title>Nucleic acid binding activity of pns6 encoded by genome segment 6 of rice ragged stunt oryzavirus.</title>
        <authorList>
            <person name="Shao C.G."/>
            <person name="Lu H.J."/>
            <person name="Wu J.H."/>
            <person name="Gong Z.X."/>
        </authorList>
    </citation>
    <scope>FUNCTION</scope>
</reference>
<reference key="3">
    <citation type="journal article" date="2010" name="Virus Res.">
        <title>Rice ragged stunt virus segment S6-encoded nonstructural protein Pns6 complements cell-to-cell movement of Tobacco mosaic virus-based chimeric virus.</title>
        <authorList>
            <person name="Wu Z."/>
            <person name="Wu J."/>
            <person name="Adkins S."/>
            <person name="Xie L."/>
            <person name="Li W."/>
        </authorList>
    </citation>
    <scope>FUNCTION</scope>
    <scope>SUBCELLULAR LOCATION</scope>
</reference>
<reference key="4">
    <citation type="journal article" date="2010" name="Virol. J.">
        <title>Identification of Pns6, a putative movement protein of RRSV, as a silencing suppressor.</title>
        <authorList>
            <person name="Wu J."/>
            <person name="Du Z."/>
            <person name="Wang C."/>
            <person name="Cai L."/>
            <person name="Hu M."/>
            <person name="Lin Q."/>
            <person name="Wu Z."/>
            <person name="Li Y."/>
            <person name="Xie L."/>
        </authorList>
    </citation>
    <scope>FUNCTION</scope>
</reference>
<dbReference type="EMBL" id="AF020337">
    <property type="protein sequence ID" value="AAC04675.1"/>
    <property type="molecule type" value="Genomic_RNA"/>
</dbReference>
<dbReference type="RefSeq" id="NP_620517.1">
    <property type="nucleotide sequence ID" value="NC_003752.1"/>
</dbReference>
<dbReference type="GeneID" id="991198"/>
<dbReference type="KEGG" id="vg:991198"/>
<dbReference type="Proteomes" id="UP000000348">
    <property type="component" value="Genome"/>
</dbReference>
<dbReference type="GO" id="GO:0044219">
    <property type="term" value="C:host cell plasmodesma"/>
    <property type="evidence" value="ECO:0007669"/>
    <property type="project" value="UniProtKB-SubCell"/>
</dbReference>
<dbReference type="GO" id="GO:0000166">
    <property type="term" value="F:nucleotide binding"/>
    <property type="evidence" value="ECO:0007669"/>
    <property type="project" value="UniProtKB-KW"/>
</dbReference>
<dbReference type="GO" id="GO:0003723">
    <property type="term" value="F:RNA binding"/>
    <property type="evidence" value="ECO:0007669"/>
    <property type="project" value="UniProtKB-KW"/>
</dbReference>
<dbReference type="GO" id="GO:0052170">
    <property type="term" value="P:symbiont-mediated suppression of host innate immune response"/>
    <property type="evidence" value="ECO:0007669"/>
    <property type="project" value="UniProtKB-KW"/>
</dbReference>
<dbReference type="GO" id="GO:0046740">
    <property type="term" value="P:transport of virus in host, cell to cell"/>
    <property type="evidence" value="ECO:0007669"/>
    <property type="project" value="UniProtKB-KW"/>
</dbReference>